<accession>C1C7H7</accession>
<comment type="catalytic activity">
    <reaction evidence="1">
        <text>uridine + ATP = UMP + ADP + H(+)</text>
        <dbReference type="Rhea" id="RHEA:16825"/>
        <dbReference type="ChEBI" id="CHEBI:15378"/>
        <dbReference type="ChEBI" id="CHEBI:16704"/>
        <dbReference type="ChEBI" id="CHEBI:30616"/>
        <dbReference type="ChEBI" id="CHEBI:57865"/>
        <dbReference type="ChEBI" id="CHEBI:456216"/>
        <dbReference type="EC" id="2.7.1.48"/>
    </reaction>
</comment>
<comment type="catalytic activity">
    <reaction evidence="1">
        <text>cytidine + ATP = CMP + ADP + H(+)</text>
        <dbReference type="Rhea" id="RHEA:24674"/>
        <dbReference type="ChEBI" id="CHEBI:15378"/>
        <dbReference type="ChEBI" id="CHEBI:17562"/>
        <dbReference type="ChEBI" id="CHEBI:30616"/>
        <dbReference type="ChEBI" id="CHEBI:60377"/>
        <dbReference type="ChEBI" id="CHEBI:456216"/>
        <dbReference type="EC" id="2.7.1.48"/>
    </reaction>
</comment>
<comment type="pathway">
    <text evidence="1">Pyrimidine metabolism; CTP biosynthesis via salvage pathway; CTP from cytidine: step 1/3.</text>
</comment>
<comment type="pathway">
    <text evidence="1">Pyrimidine metabolism; UMP biosynthesis via salvage pathway; UMP from uridine: step 1/1.</text>
</comment>
<comment type="subcellular location">
    <subcellularLocation>
        <location evidence="1">Cytoplasm</location>
    </subcellularLocation>
</comment>
<comment type="similarity">
    <text evidence="1">Belongs to the uridine kinase family.</text>
</comment>
<evidence type="ECO:0000255" key="1">
    <source>
        <dbReference type="HAMAP-Rule" id="MF_00551"/>
    </source>
</evidence>
<dbReference type="EC" id="2.7.1.48" evidence="1"/>
<dbReference type="EMBL" id="CP000918">
    <property type="protein sequence ID" value="ACO17066.1"/>
    <property type="molecule type" value="Genomic_DNA"/>
</dbReference>
<dbReference type="RefSeq" id="WP_001181378.1">
    <property type="nucleotide sequence ID" value="NC_012468.1"/>
</dbReference>
<dbReference type="SMR" id="C1C7H7"/>
<dbReference type="GeneID" id="45653496"/>
<dbReference type="KEGG" id="snm:SP70585_1258"/>
<dbReference type="HOGENOM" id="CLU_021278_1_2_9"/>
<dbReference type="UniPathway" id="UPA00574">
    <property type="reaction ID" value="UER00637"/>
</dbReference>
<dbReference type="UniPathway" id="UPA00579">
    <property type="reaction ID" value="UER00640"/>
</dbReference>
<dbReference type="Proteomes" id="UP000002211">
    <property type="component" value="Chromosome"/>
</dbReference>
<dbReference type="GO" id="GO:0005737">
    <property type="term" value="C:cytoplasm"/>
    <property type="evidence" value="ECO:0007669"/>
    <property type="project" value="UniProtKB-SubCell"/>
</dbReference>
<dbReference type="GO" id="GO:0005524">
    <property type="term" value="F:ATP binding"/>
    <property type="evidence" value="ECO:0007669"/>
    <property type="project" value="UniProtKB-UniRule"/>
</dbReference>
<dbReference type="GO" id="GO:0043771">
    <property type="term" value="F:cytidine kinase activity"/>
    <property type="evidence" value="ECO:0007669"/>
    <property type="project" value="RHEA"/>
</dbReference>
<dbReference type="GO" id="GO:0004849">
    <property type="term" value="F:uridine kinase activity"/>
    <property type="evidence" value="ECO:0007669"/>
    <property type="project" value="UniProtKB-UniRule"/>
</dbReference>
<dbReference type="GO" id="GO:0044211">
    <property type="term" value="P:CTP salvage"/>
    <property type="evidence" value="ECO:0007669"/>
    <property type="project" value="UniProtKB-UniRule"/>
</dbReference>
<dbReference type="GO" id="GO:0044206">
    <property type="term" value="P:UMP salvage"/>
    <property type="evidence" value="ECO:0007669"/>
    <property type="project" value="UniProtKB-UniRule"/>
</dbReference>
<dbReference type="CDD" id="cd02023">
    <property type="entry name" value="UMPK"/>
    <property type="match status" value="1"/>
</dbReference>
<dbReference type="Gene3D" id="3.40.50.300">
    <property type="entry name" value="P-loop containing nucleotide triphosphate hydrolases"/>
    <property type="match status" value="1"/>
</dbReference>
<dbReference type="HAMAP" id="MF_00551">
    <property type="entry name" value="Uridine_kinase"/>
    <property type="match status" value="1"/>
</dbReference>
<dbReference type="InterPro" id="IPR027417">
    <property type="entry name" value="P-loop_NTPase"/>
</dbReference>
<dbReference type="InterPro" id="IPR006083">
    <property type="entry name" value="PRK/URK"/>
</dbReference>
<dbReference type="InterPro" id="IPR026008">
    <property type="entry name" value="Uridine_kinase"/>
</dbReference>
<dbReference type="InterPro" id="IPR000764">
    <property type="entry name" value="Uridine_kinase-like"/>
</dbReference>
<dbReference type="NCBIfam" id="NF004018">
    <property type="entry name" value="PRK05480.1"/>
    <property type="match status" value="1"/>
</dbReference>
<dbReference type="NCBIfam" id="TIGR00235">
    <property type="entry name" value="udk"/>
    <property type="match status" value="1"/>
</dbReference>
<dbReference type="PANTHER" id="PTHR10285">
    <property type="entry name" value="URIDINE KINASE"/>
    <property type="match status" value="1"/>
</dbReference>
<dbReference type="Pfam" id="PF00485">
    <property type="entry name" value="PRK"/>
    <property type="match status" value="1"/>
</dbReference>
<dbReference type="PRINTS" id="PR00988">
    <property type="entry name" value="URIDINKINASE"/>
</dbReference>
<dbReference type="SUPFAM" id="SSF52540">
    <property type="entry name" value="P-loop containing nucleoside triphosphate hydrolases"/>
    <property type="match status" value="1"/>
</dbReference>
<sequence length="212" mass="24466">MQNRPIIIGVTGGSGGGKTSVSRAILSHFPDEKISMIEHDSYYKDQSHLTFEERVKTNYDHPFAFDTDLMIEQIKELLAGRPVDIPTYDYTEHTRSSKTYRQEPQDVFIVEGILVLEDKRLRDLMDIKIFVDTDDDVRIIRRIKRDMEERGRSLDSVINQYLGVVKPMYHQFIESTKRYADIVIPEGVSNTVAIDLLTTKIAKILEEARNSK</sequence>
<gene>
    <name evidence="1" type="primary">udk</name>
    <name type="ordered locus">SP70585_1258</name>
</gene>
<proteinExistence type="inferred from homology"/>
<organism>
    <name type="scientific">Streptococcus pneumoniae (strain 70585)</name>
    <dbReference type="NCBI Taxonomy" id="488221"/>
    <lineage>
        <taxon>Bacteria</taxon>
        <taxon>Bacillati</taxon>
        <taxon>Bacillota</taxon>
        <taxon>Bacilli</taxon>
        <taxon>Lactobacillales</taxon>
        <taxon>Streptococcaceae</taxon>
        <taxon>Streptococcus</taxon>
    </lineage>
</organism>
<feature type="chain" id="PRO_1000200522" description="Uridine kinase">
    <location>
        <begin position="1"/>
        <end position="212"/>
    </location>
</feature>
<feature type="binding site" evidence="1">
    <location>
        <begin position="12"/>
        <end position="19"/>
    </location>
    <ligand>
        <name>ATP</name>
        <dbReference type="ChEBI" id="CHEBI:30616"/>
    </ligand>
</feature>
<name>URK_STRP7</name>
<protein>
    <recommendedName>
        <fullName evidence="1">Uridine kinase</fullName>
        <ecNumber evidence="1">2.7.1.48</ecNumber>
    </recommendedName>
    <alternativeName>
        <fullName evidence="1">Cytidine monophosphokinase</fullName>
    </alternativeName>
    <alternativeName>
        <fullName evidence="1">Uridine monophosphokinase</fullName>
    </alternativeName>
</protein>
<keyword id="KW-0067">ATP-binding</keyword>
<keyword id="KW-0963">Cytoplasm</keyword>
<keyword id="KW-0418">Kinase</keyword>
<keyword id="KW-0547">Nucleotide-binding</keyword>
<keyword id="KW-0808">Transferase</keyword>
<reference key="1">
    <citation type="journal article" date="2010" name="Genome Biol.">
        <title>Structure and dynamics of the pan-genome of Streptococcus pneumoniae and closely related species.</title>
        <authorList>
            <person name="Donati C."/>
            <person name="Hiller N.L."/>
            <person name="Tettelin H."/>
            <person name="Muzzi A."/>
            <person name="Croucher N.J."/>
            <person name="Angiuoli S.V."/>
            <person name="Oggioni M."/>
            <person name="Dunning Hotopp J.C."/>
            <person name="Hu F.Z."/>
            <person name="Riley D.R."/>
            <person name="Covacci A."/>
            <person name="Mitchell T.J."/>
            <person name="Bentley S.D."/>
            <person name="Kilian M."/>
            <person name="Ehrlich G.D."/>
            <person name="Rappuoli R."/>
            <person name="Moxon E.R."/>
            <person name="Masignani V."/>
        </authorList>
    </citation>
    <scope>NUCLEOTIDE SEQUENCE [LARGE SCALE GENOMIC DNA]</scope>
    <source>
        <strain>70585</strain>
    </source>
</reference>